<protein>
    <recommendedName>
        <fullName evidence="7">Sterol 3-beta-glucosyltransferase</fullName>
        <ecNumber evidence="1">2.4.1.-</ecNumber>
        <ecNumber evidence="1">2.4.1.173</ecNumber>
    </recommendedName>
    <alternativeName>
        <fullName evidence="6">Autophagy-related protein 26</fullName>
    </alternativeName>
</protein>
<sequence length="1384" mass="154514">MPNMKPLLEDAKRRVDRRLSASRQSISSSRIFSSAFPDRLKDDHDAQVDYTAPPRGAGSRDGQLPYMHQSIFSMIAAVGSKSDFHARFDESSDSEGEAEGQTQKQPGKASLSNKKKFPLSPTLKPQSTLEGRGRRHRRSISDNKLLRSLKPSPKSSKGTETTVQTEPPTSDEMSPLASPRRARSATPRAAPILSRMLEAEALLDKKQSADQPSSSTKGETDGTSEQSCASPLSLRLKEMFGFEMPEKVLMEYACSLLQNILLQGYMYVTEGHICFYAYLPRKSAVTIRSGYLHKRGRKNPKYNRYWFSLKGDVLSYYTDPSSLYFPSGHVDLRYGISASLTEQKDKDKEVRDFQVTTDQRTYYFRADSSASAKEWVKALQKVIFRAHNEGDSVKISFPIESIIDIEESPITDLAETFKIRVVESDESYAIDEYYFSFFESGRDAYNFVKGLISEGPMKTSQLLPPPSEQTSPATRARGPRNRWSLNSDLSQSRGNGIFKTQRKRSASTGQTNSGPDGIGMSPRQRDLSDSFVNSFEQATDASAVLQSMIDTTESASQILNRSDVFQSPTIHTLRQRHPSGDRTGRRLSDGTARSTHPNAADANRNGQEMQYASSDSDQGTQHPSKVNSSAPTLNELVKAGAYPLQRAAGFAEYLRSRSRQMSNLLASESMGYIEKVSGMWAGGRRHYGETEGVLPDDQDVDPEDKEDGVKHGDRFRAHFALPSTERLQATYYAYLHRVLPLYGKIYISQKKLCFRSLIPGTRTKLILPLKDIENVEKEKGFRFGYQGLVIIIRGHEELFFEFNTADARDDCAVTVHQSLESMRFLVESGLLAEQEKDEIESAQAEHRMLQEARLDGAGEHDSHASVNESSELHPIFDDPRASIINFKPSESLRITCLTIGSRGDVQPYIALCKGLLAEGHKPKIATHAEFEPWVRQHGIDFAPVDGDPAELMRICVENGMFTYSFLKEASTKFRGWIDDLLSSAWASCQDSDLLIESPSAMAGIHIAEALRIPYFRAFTMPWSRTRAYPHAFAVPENKMGGAYNYITYVMFDTVFWKAIAGQVNRWRKKQLGLKATTLDKMQPNKVPFLYNYSPSVVAPPLDYPDWIRITGYWFLSEGGNWTPPTDLLDFIHRARSDGKKIVYIGFGSIVVSDPSALTRTVVESVLKADVRCILSKGWSDRLGDPASAKVEIPLPPEIFQIQAAPHDWLFSQIDAAAHHGGAGTTGASLRAGVPTIVKPFFGDQFFFGTRVEDLGVGICMKKLNVSVFSRALWEATHSERMIVKARELGAQIRSENGVDTAIQAIYRDLEYAKTLARQRSIVSSTPFSPTPSAKTTAEQEEDDVDDSEEWTFVGDDTEIDVSRRLRDRAVSDADMLPEPVTSAS</sequence>
<reference key="1">
    <citation type="journal article" date="2005" name="Nature">
        <title>Genome sequencing and analysis of Aspergillus oryzae.</title>
        <authorList>
            <person name="Machida M."/>
            <person name="Asai K."/>
            <person name="Sano M."/>
            <person name="Tanaka T."/>
            <person name="Kumagai T."/>
            <person name="Terai G."/>
            <person name="Kusumoto K."/>
            <person name="Arima T."/>
            <person name="Akita O."/>
            <person name="Kashiwagi Y."/>
            <person name="Abe K."/>
            <person name="Gomi K."/>
            <person name="Horiuchi H."/>
            <person name="Kitamoto K."/>
            <person name="Kobayashi T."/>
            <person name="Takeuchi M."/>
            <person name="Denning D.W."/>
            <person name="Galagan J.E."/>
            <person name="Nierman W.C."/>
            <person name="Yu J."/>
            <person name="Archer D.B."/>
            <person name="Bennett J.W."/>
            <person name="Bhatnagar D."/>
            <person name="Cleveland T.E."/>
            <person name="Fedorova N.D."/>
            <person name="Gotoh O."/>
            <person name="Horikawa H."/>
            <person name="Hosoyama A."/>
            <person name="Ichinomiya M."/>
            <person name="Igarashi R."/>
            <person name="Iwashita K."/>
            <person name="Juvvadi P.R."/>
            <person name="Kato M."/>
            <person name="Kato Y."/>
            <person name="Kin T."/>
            <person name="Kokubun A."/>
            <person name="Maeda H."/>
            <person name="Maeyama N."/>
            <person name="Maruyama J."/>
            <person name="Nagasaki H."/>
            <person name="Nakajima T."/>
            <person name="Oda K."/>
            <person name="Okada K."/>
            <person name="Paulsen I."/>
            <person name="Sakamoto K."/>
            <person name="Sawano T."/>
            <person name="Takahashi M."/>
            <person name="Takase K."/>
            <person name="Terabayashi Y."/>
            <person name="Wortman J.R."/>
            <person name="Yamada O."/>
            <person name="Yamagata Y."/>
            <person name="Anazawa H."/>
            <person name="Hata Y."/>
            <person name="Koide Y."/>
            <person name="Komori T."/>
            <person name="Koyama Y."/>
            <person name="Minetoki T."/>
            <person name="Suharnan S."/>
            <person name="Tanaka A."/>
            <person name="Isono K."/>
            <person name="Kuhara S."/>
            <person name="Ogasawara N."/>
            <person name="Kikuchi H."/>
        </authorList>
    </citation>
    <scope>NUCLEOTIDE SEQUENCE [LARGE SCALE GENOMIC DNA]</scope>
    <source>
        <strain>ATCC 42149 / RIB 40</strain>
    </source>
</reference>
<reference key="2">
    <citation type="journal article" date="2017" name="Biosci. Biotechnol. Biochem.">
        <title>AoAtg26, a putative sterol glucosyltransferase, is required for autophagic degradation of peroxisomes, mitochondria, and nuclei in the filamentous fungus Aspergillus oryzae.</title>
        <authorList>
            <person name="Kikuma T."/>
            <person name="Tadokoro T."/>
            <person name="Maruyama J.I."/>
            <person name="Kitamoto K."/>
        </authorList>
    </citation>
    <scope>FUNCTION</scope>
    <scope>DISRUPTION PHENOTYPE</scope>
    <scope>SUBCELLULAR LOCATION</scope>
    <scope>DOMAIN</scope>
</reference>
<gene>
    <name evidence="6" type="primary">atg26</name>
    <name type="ORF">AO090011000498</name>
</gene>
<proteinExistence type="inferred from homology"/>
<feature type="chain" id="PRO_0000318042" description="Sterol 3-beta-glucosyltransferase">
    <location>
        <begin position="1"/>
        <end position="1384"/>
    </location>
</feature>
<feature type="domain" description="GRAM 1" evidence="2">
    <location>
        <begin position="237"/>
        <end position="284"/>
    </location>
</feature>
<feature type="domain" description="PH" evidence="3">
    <location>
        <begin position="285"/>
        <end position="384"/>
    </location>
</feature>
<feature type="domain" description="GRAM 2" evidence="2">
    <location>
        <begin position="714"/>
        <end position="817"/>
    </location>
</feature>
<feature type="region of interest" description="Disordered" evidence="4">
    <location>
        <begin position="1"/>
        <end position="64"/>
    </location>
</feature>
<feature type="region of interest" description="Disordered" evidence="4">
    <location>
        <begin position="86"/>
        <end position="189"/>
    </location>
</feature>
<feature type="region of interest" description="Disordered" evidence="4">
    <location>
        <begin position="204"/>
        <end position="229"/>
    </location>
</feature>
<feature type="region of interest" description="Disordered" evidence="4">
    <location>
        <begin position="457"/>
        <end position="526"/>
    </location>
</feature>
<feature type="region of interest" description="Disordered" evidence="4">
    <location>
        <begin position="560"/>
        <end position="629"/>
    </location>
</feature>
<feature type="region of interest" description="Disordered" evidence="4">
    <location>
        <begin position="1322"/>
        <end position="1350"/>
    </location>
</feature>
<feature type="compositionally biased region" description="Basic and acidic residues" evidence="4">
    <location>
        <begin position="7"/>
        <end position="19"/>
    </location>
</feature>
<feature type="compositionally biased region" description="Low complexity" evidence="4">
    <location>
        <begin position="21"/>
        <end position="36"/>
    </location>
</feature>
<feature type="compositionally biased region" description="Basic and acidic residues" evidence="4">
    <location>
        <begin position="38"/>
        <end position="47"/>
    </location>
</feature>
<feature type="compositionally biased region" description="Low complexity" evidence="4">
    <location>
        <begin position="146"/>
        <end position="156"/>
    </location>
</feature>
<feature type="compositionally biased region" description="Polar residues" evidence="4">
    <location>
        <begin position="158"/>
        <end position="172"/>
    </location>
</feature>
<feature type="compositionally biased region" description="Low complexity" evidence="4">
    <location>
        <begin position="174"/>
        <end position="189"/>
    </location>
</feature>
<feature type="compositionally biased region" description="Polar residues" evidence="4">
    <location>
        <begin position="209"/>
        <end position="229"/>
    </location>
</feature>
<feature type="compositionally biased region" description="Polar residues" evidence="4">
    <location>
        <begin position="458"/>
        <end position="473"/>
    </location>
</feature>
<feature type="compositionally biased region" description="Polar residues" evidence="4">
    <location>
        <begin position="483"/>
        <end position="494"/>
    </location>
</feature>
<feature type="compositionally biased region" description="Polar residues" evidence="4">
    <location>
        <begin position="560"/>
        <end position="572"/>
    </location>
</feature>
<feature type="compositionally biased region" description="Basic and acidic residues" evidence="4">
    <location>
        <begin position="578"/>
        <end position="588"/>
    </location>
</feature>
<feature type="compositionally biased region" description="Polar residues" evidence="4">
    <location>
        <begin position="604"/>
        <end position="629"/>
    </location>
</feature>
<feature type="compositionally biased region" description="Polar residues" evidence="4">
    <location>
        <begin position="1322"/>
        <end position="1336"/>
    </location>
</feature>
<feature type="compositionally biased region" description="Acidic residues" evidence="4">
    <location>
        <begin position="1338"/>
        <end position="1350"/>
    </location>
</feature>
<feature type="binding site" evidence="1">
    <location>
        <position position="901"/>
    </location>
    <ligand>
        <name>UDP-alpha-D-glucose</name>
        <dbReference type="ChEBI" id="CHEBI:58885"/>
    </ligand>
</feature>
<feature type="binding site" evidence="1">
    <location>
        <position position="902"/>
    </location>
    <ligand>
        <name>UDP-alpha-D-glucose</name>
        <dbReference type="ChEBI" id="CHEBI:58885"/>
    </ligand>
</feature>
<feature type="binding site" evidence="1">
    <location>
        <position position="904"/>
    </location>
    <ligand>
        <name>UDP-alpha-D-glucose</name>
        <dbReference type="ChEBI" id="CHEBI:58885"/>
    </ligand>
</feature>
<feature type="binding site" evidence="1">
    <location>
        <position position="1204"/>
    </location>
    <ligand>
        <name>UDP-alpha-D-glucose</name>
        <dbReference type="ChEBI" id="CHEBI:58885"/>
    </ligand>
</feature>
<feature type="binding site" evidence="1">
    <location>
        <position position="1206"/>
    </location>
    <ligand>
        <name>UDP-alpha-D-glucose</name>
        <dbReference type="ChEBI" id="CHEBI:58885"/>
    </ligand>
</feature>
<feature type="binding site" evidence="1">
    <location>
        <position position="1219"/>
    </location>
    <ligand>
        <name>UDP-alpha-D-glucose</name>
        <dbReference type="ChEBI" id="CHEBI:58885"/>
    </ligand>
</feature>
<feature type="binding site" evidence="1">
    <location>
        <position position="1223"/>
    </location>
    <ligand>
        <name>UDP-alpha-D-glucose</name>
        <dbReference type="ChEBI" id="CHEBI:58885"/>
    </ligand>
</feature>
<feature type="binding site" evidence="1">
    <location>
        <position position="1224"/>
    </location>
    <ligand>
        <name>UDP-alpha-D-glucose</name>
        <dbReference type="ChEBI" id="CHEBI:58885"/>
    </ligand>
</feature>
<feature type="binding site" evidence="1">
    <location>
        <position position="1243"/>
    </location>
    <ligand>
        <name>UDP-alpha-D-glucose</name>
        <dbReference type="ChEBI" id="CHEBI:58885"/>
    </ligand>
</feature>
<feature type="binding site" evidence="1">
    <location>
        <position position="1244"/>
    </location>
    <ligand>
        <name>UDP-alpha-D-glucose</name>
        <dbReference type="ChEBI" id="CHEBI:58885"/>
    </ligand>
</feature>
<accession>Q2U0C3</accession>
<organism>
    <name type="scientific">Aspergillus oryzae (strain ATCC 42149 / RIB 40)</name>
    <name type="common">Yellow koji mold</name>
    <dbReference type="NCBI Taxonomy" id="510516"/>
    <lineage>
        <taxon>Eukaryota</taxon>
        <taxon>Fungi</taxon>
        <taxon>Dikarya</taxon>
        <taxon>Ascomycota</taxon>
        <taxon>Pezizomycotina</taxon>
        <taxon>Eurotiomycetes</taxon>
        <taxon>Eurotiomycetidae</taxon>
        <taxon>Eurotiales</taxon>
        <taxon>Aspergillaceae</taxon>
        <taxon>Aspergillus</taxon>
        <taxon>Aspergillus subgen. Circumdati</taxon>
    </lineage>
</organism>
<comment type="function">
    <text evidence="1 5">Sterol glycosyltransferase responsible for the glycosylation of ergosterol to form ergosterol-glucoside (By similarity). Involved in cytoplasm to vacuole transport (Cvt), pexophagy or nonselective autophagy (PubMed:27696999).</text>
</comment>
<comment type="catalytic activity">
    <reaction evidence="1">
        <text>a sterol + UDP-alpha-D-glucose = a sterol 3-beta-D-glucoside + UDP + H(+)</text>
        <dbReference type="Rhea" id="RHEA:22724"/>
        <dbReference type="ChEBI" id="CHEBI:15378"/>
        <dbReference type="ChEBI" id="CHEBI:15889"/>
        <dbReference type="ChEBI" id="CHEBI:37424"/>
        <dbReference type="ChEBI" id="CHEBI:58223"/>
        <dbReference type="ChEBI" id="CHEBI:58885"/>
        <dbReference type="EC" id="2.4.1.173"/>
    </reaction>
    <physiologicalReaction direction="left-to-right" evidence="1">
        <dbReference type="Rhea" id="RHEA:22725"/>
    </physiologicalReaction>
</comment>
<comment type="catalytic activity">
    <reaction evidence="1">
        <text>ergosterol + UDP-alpha-D-glucose = ergosteryl 3-beta-D-glucoside + UDP + H(+)</text>
        <dbReference type="Rhea" id="RHEA:61836"/>
        <dbReference type="ChEBI" id="CHEBI:15378"/>
        <dbReference type="ChEBI" id="CHEBI:16933"/>
        <dbReference type="ChEBI" id="CHEBI:52973"/>
        <dbReference type="ChEBI" id="CHEBI:58223"/>
        <dbReference type="ChEBI" id="CHEBI:58885"/>
    </reaction>
    <physiologicalReaction direction="left-to-right" evidence="1">
        <dbReference type="Rhea" id="RHEA:61837"/>
    </physiologicalReaction>
</comment>
<comment type="subcellular location">
    <subcellularLocation>
        <location evidence="1">Cytoplasm</location>
    </subcellularLocation>
    <subcellularLocation>
        <location evidence="5">Preautophagosomal structure membrane</location>
        <topology evidence="5">Peripheral membrane protein</topology>
    </subcellularLocation>
</comment>
<comment type="domain">
    <text evidence="5">The GRAM and PH domains are required for the localization of ATG26 to the preautophagosomal structure (PAS) and are involved in autophagy (PubMed:27696999).</text>
</comment>
<comment type="disruption phenotype">
    <text evidence="5">Leads to white colonies with decreased conidiation and aerial hyphae formation (PubMed:27696999). Impairs autophagy by the accumulation of the intermediate of autophagosome (PubMed:27696999).</text>
</comment>
<comment type="similarity">
    <text evidence="7">Belongs to the glycosyltransferase 28 family.</text>
</comment>
<comment type="sequence caution" evidence="7">
    <conflict type="erroneous gene model prediction">
        <sequence resource="EMBL-CDS" id="BAE64992"/>
    </conflict>
</comment>
<evidence type="ECO:0000250" key="1">
    <source>
        <dbReference type="UniProtKB" id="Q06321"/>
    </source>
</evidence>
<evidence type="ECO:0000255" key="2"/>
<evidence type="ECO:0000255" key="3">
    <source>
        <dbReference type="PROSITE-ProRule" id="PRU00145"/>
    </source>
</evidence>
<evidence type="ECO:0000256" key="4">
    <source>
        <dbReference type="SAM" id="MobiDB-lite"/>
    </source>
</evidence>
<evidence type="ECO:0000269" key="5">
    <source>
    </source>
</evidence>
<evidence type="ECO:0000303" key="6">
    <source>
    </source>
</evidence>
<evidence type="ECO:0000305" key="7"/>
<name>ATG26_ASPOR</name>
<keyword id="KW-0072">Autophagy</keyword>
<keyword id="KW-0963">Cytoplasm</keyword>
<keyword id="KW-0328">Glycosyltransferase</keyword>
<keyword id="KW-0444">Lipid biosynthesis</keyword>
<keyword id="KW-0443">Lipid metabolism</keyword>
<keyword id="KW-0472">Membrane</keyword>
<keyword id="KW-0653">Protein transport</keyword>
<keyword id="KW-1185">Reference proteome</keyword>
<keyword id="KW-0677">Repeat</keyword>
<keyword id="KW-0752">Steroid biosynthesis</keyword>
<keyword id="KW-0753">Steroid metabolism</keyword>
<keyword id="KW-0756">Sterol biosynthesis</keyword>
<keyword id="KW-1207">Sterol metabolism</keyword>
<keyword id="KW-0808">Transferase</keyword>
<keyword id="KW-0813">Transport</keyword>
<dbReference type="EC" id="2.4.1.-" evidence="1"/>
<dbReference type="EC" id="2.4.1.173" evidence="1"/>
<dbReference type="EMBL" id="BA000055">
    <property type="protein sequence ID" value="BAE64992.1"/>
    <property type="status" value="ALT_SEQ"/>
    <property type="molecule type" value="Genomic_DNA"/>
</dbReference>
<dbReference type="SMR" id="Q2U0C3"/>
<dbReference type="STRING" id="510516.Q2U0C3"/>
<dbReference type="CAZy" id="GT1">
    <property type="family name" value="Glycosyltransferase Family 1"/>
</dbReference>
<dbReference type="Proteomes" id="UP000006564">
    <property type="component" value="Chromosome 7"/>
</dbReference>
<dbReference type="GO" id="GO:0034045">
    <property type="term" value="C:phagophore assembly site membrane"/>
    <property type="evidence" value="ECO:0007669"/>
    <property type="project" value="UniProtKB-SubCell"/>
</dbReference>
<dbReference type="GO" id="GO:0016906">
    <property type="term" value="F:sterol 3-beta-glucosyltransferase activity"/>
    <property type="evidence" value="ECO:0007669"/>
    <property type="project" value="UniProtKB-EC"/>
</dbReference>
<dbReference type="GO" id="GO:0006914">
    <property type="term" value="P:autophagy"/>
    <property type="evidence" value="ECO:0007669"/>
    <property type="project" value="UniProtKB-KW"/>
</dbReference>
<dbReference type="GO" id="GO:0005975">
    <property type="term" value="P:carbohydrate metabolic process"/>
    <property type="evidence" value="ECO:0007669"/>
    <property type="project" value="InterPro"/>
</dbReference>
<dbReference type="GO" id="GO:0030259">
    <property type="term" value="P:lipid glycosylation"/>
    <property type="evidence" value="ECO:0007669"/>
    <property type="project" value="InterPro"/>
</dbReference>
<dbReference type="GO" id="GO:0015031">
    <property type="term" value="P:protein transport"/>
    <property type="evidence" value="ECO:0007669"/>
    <property type="project" value="UniProtKB-KW"/>
</dbReference>
<dbReference type="GO" id="GO:0016126">
    <property type="term" value="P:sterol biosynthetic process"/>
    <property type="evidence" value="ECO:0007669"/>
    <property type="project" value="UniProtKB-KW"/>
</dbReference>
<dbReference type="CDD" id="cd03784">
    <property type="entry name" value="GT1_Gtf-like"/>
    <property type="match status" value="1"/>
</dbReference>
<dbReference type="CDD" id="cd13215">
    <property type="entry name" value="PH-GRAM1_AGT26"/>
    <property type="match status" value="1"/>
</dbReference>
<dbReference type="CDD" id="cd13216">
    <property type="entry name" value="PH-GRAM2_AGT26"/>
    <property type="match status" value="1"/>
</dbReference>
<dbReference type="FunFam" id="2.30.29.30:FF:000303">
    <property type="entry name" value="Sterol 3-beta-glucosyltransferase"/>
    <property type="match status" value="1"/>
</dbReference>
<dbReference type="FunFam" id="2.30.29.30:FF:000560">
    <property type="entry name" value="Sterol 3-beta-glucosyltransferase"/>
    <property type="match status" value="1"/>
</dbReference>
<dbReference type="FunFam" id="3.40.50.2000:FF:000029">
    <property type="entry name" value="Sterol 3-beta-glucosyltransferase"/>
    <property type="match status" value="1"/>
</dbReference>
<dbReference type="FunFam" id="3.40.50.2000:FF:000009">
    <property type="entry name" value="Sterol 3-beta-glucosyltransferase UGT80A2"/>
    <property type="match status" value="1"/>
</dbReference>
<dbReference type="Gene3D" id="3.40.50.2000">
    <property type="entry name" value="Glycogen Phosphorylase B"/>
    <property type="match status" value="2"/>
</dbReference>
<dbReference type="Gene3D" id="2.30.29.30">
    <property type="entry name" value="Pleckstrin-homology domain (PH domain)/Phosphotyrosine-binding domain (PTB)"/>
    <property type="match status" value="3"/>
</dbReference>
<dbReference type="InterPro" id="IPR048066">
    <property type="entry name" value="ATG26_PH_GRAM1"/>
</dbReference>
<dbReference type="InterPro" id="IPR048065">
    <property type="entry name" value="ATG26_PH_GRAM2"/>
</dbReference>
<dbReference type="InterPro" id="IPR010610">
    <property type="entry name" value="EryCIII-like_C"/>
</dbReference>
<dbReference type="InterPro" id="IPR050426">
    <property type="entry name" value="Glycosyltransferase_28"/>
</dbReference>
<dbReference type="InterPro" id="IPR004276">
    <property type="entry name" value="GlycoTrans_28_N"/>
</dbReference>
<dbReference type="InterPro" id="IPR004182">
    <property type="entry name" value="GRAM"/>
</dbReference>
<dbReference type="InterPro" id="IPR011993">
    <property type="entry name" value="PH-like_dom_sf"/>
</dbReference>
<dbReference type="InterPro" id="IPR001849">
    <property type="entry name" value="PH_domain"/>
</dbReference>
<dbReference type="InterPro" id="IPR002213">
    <property type="entry name" value="UDP_glucos_trans"/>
</dbReference>
<dbReference type="PANTHER" id="PTHR48050">
    <property type="entry name" value="STEROL 3-BETA-GLUCOSYLTRANSFERASE"/>
    <property type="match status" value="1"/>
</dbReference>
<dbReference type="PANTHER" id="PTHR48050:SF25">
    <property type="entry name" value="STEROL 3-BETA-GLUCOSYLTRANSFERASE"/>
    <property type="match status" value="1"/>
</dbReference>
<dbReference type="Pfam" id="PF06722">
    <property type="entry name" value="EryCIII-like_C"/>
    <property type="match status" value="1"/>
</dbReference>
<dbReference type="Pfam" id="PF03033">
    <property type="entry name" value="Glyco_transf_28"/>
    <property type="match status" value="1"/>
</dbReference>
<dbReference type="Pfam" id="PF02893">
    <property type="entry name" value="GRAM"/>
    <property type="match status" value="2"/>
</dbReference>
<dbReference type="Pfam" id="PF00169">
    <property type="entry name" value="PH"/>
    <property type="match status" value="1"/>
</dbReference>
<dbReference type="SMART" id="SM00568">
    <property type="entry name" value="GRAM"/>
    <property type="match status" value="2"/>
</dbReference>
<dbReference type="SMART" id="SM00233">
    <property type="entry name" value="PH"/>
    <property type="match status" value="1"/>
</dbReference>
<dbReference type="SUPFAM" id="SSF50729">
    <property type="entry name" value="PH domain-like"/>
    <property type="match status" value="1"/>
</dbReference>
<dbReference type="SUPFAM" id="SSF53756">
    <property type="entry name" value="UDP-Glycosyltransferase/glycogen phosphorylase"/>
    <property type="match status" value="1"/>
</dbReference>
<dbReference type="PROSITE" id="PS50003">
    <property type="entry name" value="PH_DOMAIN"/>
    <property type="match status" value="1"/>
</dbReference>